<dbReference type="EMBL" id="CP000802">
    <property type="protein sequence ID" value="ABV08154.1"/>
    <property type="molecule type" value="Genomic_DNA"/>
</dbReference>
<dbReference type="RefSeq" id="WP_000429386.1">
    <property type="nucleotide sequence ID" value="NC_009800.1"/>
</dbReference>
<dbReference type="SMR" id="A8A6K0"/>
<dbReference type="GeneID" id="98390858"/>
<dbReference type="KEGG" id="ecx:EcHS_A3953"/>
<dbReference type="HOGENOM" id="CLU_148047_1_0_6"/>
<dbReference type="GO" id="GO:0005886">
    <property type="term" value="C:plasma membrane"/>
    <property type="evidence" value="ECO:0007669"/>
    <property type="project" value="UniProtKB-SubCell"/>
</dbReference>
<dbReference type="GO" id="GO:0045259">
    <property type="term" value="C:proton-transporting ATP synthase complex"/>
    <property type="evidence" value="ECO:0007669"/>
    <property type="project" value="UniProtKB-KW"/>
</dbReference>
<dbReference type="GO" id="GO:0033177">
    <property type="term" value="C:proton-transporting two-sector ATPase complex, proton-transporting domain"/>
    <property type="evidence" value="ECO:0007669"/>
    <property type="project" value="InterPro"/>
</dbReference>
<dbReference type="GO" id="GO:0008289">
    <property type="term" value="F:lipid binding"/>
    <property type="evidence" value="ECO:0007669"/>
    <property type="project" value="UniProtKB-KW"/>
</dbReference>
<dbReference type="GO" id="GO:0046933">
    <property type="term" value="F:proton-transporting ATP synthase activity, rotational mechanism"/>
    <property type="evidence" value="ECO:0007669"/>
    <property type="project" value="UniProtKB-UniRule"/>
</dbReference>
<dbReference type="CDD" id="cd18185">
    <property type="entry name" value="ATP-synt_Fo_c_ATPE"/>
    <property type="match status" value="1"/>
</dbReference>
<dbReference type="FunFam" id="1.20.20.10:FF:000002">
    <property type="entry name" value="ATP synthase subunit c"/>
    <property type="match status" value="1"/>
</dbReference>
<dbReference type="Gene3D" id="1.20.20.10">
    <property type="entry name" value="F1F0 ATP synthase subunit C"/>
    <property type="match status" value="1"/>
</dbReference>
<dbReference type="HAMAP" id="MF_01396">
    <property type="entry name" value="ATP_synth_c_bact"/>
    <property type="match status" value="1"/>
</dbReference>
<dbReference type="InterPro" id="IPR005953">
    <property type="entry name" value="ATP_synth_csu_bac/chlpt"/>
</dbReference>
<dbReference type="InterPro" id="IPR000454">
    <property type="entry name" value="ATP_synth_F0_csu"/>
</dbReference>
<dbReference type="InterPro" id="IPR020537">
    <property type="entry name" value="ATP_synth_F0_csu_DDCD_BS"/>
</dbReference>
<dbReference type="InterPro" id="IPR038662">
    <property type="entry name" value="ATP_synth_F0_csu_sf"/>
</dbReference>
<dbReference type="InterPro" id="IPR002379">
    <property type="entry name" value="ATPase_proteolipid_c-like_dom"/>
</dbReference>
<dbReference type="InterPro" id="IPR035921">
    <property type="entry name" value="F/V-ATP_Csub_sf"/>
</dbReference>
<dbReference type="NCBIfam" id="TIGR01260">
    <property type="entry name" value="ATP_synt_c"/>
    <property type="match status" value="1"/>
</dbReference>
<dbReference type="NCBIfam" id="NF005363">
    <property type="entry name" value="PRK06876.1"/>
    <property type="match status" value="1"/>
</dbReference>
<dbReference type="Pfam" id="PF00137">
    <property type="entry name" value="ATP-synt_C"/>
    <property type="match status" value="1"/>
</dbReference>
<dbReference type="PRINTS" id="PR00124">
    <property type="entry name" value="ATPASEC"/>
</dbReference>
<dbReference type="SUPFAM" id="SSF81333">
    <property type="entry name" value="F1F0 ATP synthase subunit C"/>
    <property type="match status" value="1"/>
</dbReference>
<dbReference type="PROSITE" id="PS00605">
    <property type="entry name" value="ATPASE_C"/>
    <property type="match status" value="1"/>
</dbReference>
<gene>
    <name evidence="1" type="primary">atpE</name>
    <name type="ordered locus">EcHS_A3953</name>
</gene>
<accession>A8A6K0</accession>
<sequence length="79" mass="8256">MENLNMDLLYMAAAVMMGLAAIGAAIGIGILGGKFLEGAARQPDLIPLLRTQFFIVMGLVDAIPMIAVGLGLYVMFAVA</sequence>
<protein>
    <recommendedName>
        <fullName evidence="1">ATP synthase subunit c</fullName>
    </recommendedName>
    <alternativeName>
        <fullName evidence="1">ATP synthase F(0) sector subunit c</fullName>
    </alternativeName>
    <alternativeName>
        <fullName evidence="1">F-type ATPase subunit c</fullName>
        <shortName evidence="1">F-ATPase subunit c</shortName>
    </alternativeName>
    <alternativeName>
        <fullName evidence="1">Lipid-binding protein</fullName>
    </alternativeName>
</protein>
<organism>
    <name type="scientific">Escherichia coli O9:H4 (strain HS)</name>
    <dbReference type="NCBI Taxonomy" id="331112"/>
    <lineage>
        <taxon>Bacteria</taxon>
        <taxon>Pseudomonadati</taxon>
        <taxon>Pseudomonadota</taxon>
        <taxon>Gammaproteobacteria</taxon>
        <taxon>Enterobacterales</taxon>
        <taxon>Enterobacteriaceae</taxon>
        <taxon>Escherichia</taxon>
    </lineage>
</organism>
<proteinExistence type="inferred from homology"/>
<evidence type="ECO:0000255" key="1">
    <source>
        <dbReference type="HAMAP-Rule" id="MF_01396"/>
    </source>
</evidence>
<keyword id="KW-0066">ATP synthesis</keyword>
<keyword id="KW-0997">Cell inner membrane</keyword>
<keyword id="KW-1003">Cell membrane</keyword>
<keyword id="KW-0138">CF(0)</keyword>
<keyword id="KW-0375">Hydrogen ion transport</keyword>
<keyword id="KW-0406">Ion transport</keyword>
<keyword id="KW-0446">Lipid-binding</keyword>
<keyword id="KW-0472">Membrane</keyword>
<keyword id="KW-0812">Transmembrane</keyword>
<keyword id="KW-1133">Transmembrane helix</keyword>
<keyword id="KW-0813">Transport</keyword>
<name>ATPL_ECOHS</name>
<reference key="1">
    <citation type="journal article" date="2008" name="J. Bacteriol.">
        <title>The pangenome structure of Escherichia coli: comparative genomic analysis of E. coli commensal and pathogenic isolates.</title>
        <authorList>
            <person name="Rasko D.A."/>
            <person name="Rosovitz M.J."/>
            <person name="Myers G.S.A."/>
            <person name="Mongodin E.F."/>
            <person name="Fricke W.F."/>
            <person name="Gajer P."/>
            <person name="Crabtree J."/>
            <person name="Sebaihia M."/>
            <person name="Thomson N.R."/>
            <person name="Chaudhuri R."/>
            <person name="Henderson I.R."/>
            <person name="Sperandio V."/>
            <person name="Ravel J."/>
        </authorList>
    </citation>
    <scope>NUCLEOTIDE SEQUENCE [LARGE SCALE GENOMIC DNA]</scope>
    <source>
        <strain>HS</strain>
    </source>
</reference>
<feature type="chain" id="PRO_1000184369" description="ATP synthase subunit c">
    <location>
        <begin position="1"/>
        <end position="79"/>
    </location>
</feature>
<feature type="transmembrane region" description="Helical" evidence="1">
    <location>
        <begin position="11"/>
        <end position="31"/>
    </location>
</feature>
<feature type="transmembrane region" description="Helical" evidence="1">
    <location>
        <begin position="53"/>
        <end position="73"/>
    </location>
</feature>
<feature type="site" description="Reversibly protonated during proton transport" evidence="1">
    <location>
        <position position="61"/>
    </location>
</feature>
<comment type="function">
    <text evidence="1">F(1)F(0) ATP synthase produces ATP from ADP in the presence of a proton or sodium gradient. F-type ATPases consist of two structural domains, F(1) containing the extramembraneous catalytic core and F(0) containing the membrane proton channel, linked together by a central stalk and a peripheral stalk. During catalysis, ATP synthesis in the catalytic domain of F(1) is coupled via a rotary mechanism of the central stalk subunits to proton translocation.</text>
</comment>
<comment type="function">
    <text evidence="1">Key component of the F(0) channel; it plays a direct role in translocation across the membrane. A homomeric c-ring of between 10-14 subunits forms the central stalk rotor element with the F(1) delta and epsilon subunits.</text>
</comment>
<comment type="subunit">
    <text evidence="1">F-type ATPases have 2 components, F(1) - the catalytic core - and F(0) - the membrane proton channel. F(1) has five subunits: alpha(3), beta(3), gamma(1), delta(1), epsilon(1). F(0) has three main subunits: a(1), b(2) and c(10-14). The alpha and beta chains form an alternating ring which encloses part of the gamma chain. F(1) is attached to F(0) by a central stalk formed by the gamma and epsilon chains, while a peripheral stalk is formed by the delta and b chains.</text>
</comment>
<comment type="subcellular location">
    <subcellularLocation>
        <location evidence="1">Cell inner membrane</location>
        <topology evidence="1">Multi-pass membrane protein</topology>
    </subcellularLocation>
</comment>
<comment type="similarity">
    <text evidence="1">Belongs to the ATPase C chain family.</text>
</comment>